<keyword id="KW-0028">Amino-acid biosynthesis</keyword>
<keyword id="KW-0055">Arginine biosynthesis</keyword>
<keyword id="KW-0067">ATP-binding</keyword>
<keyword id="KW-0436">Ligase</keyword>
<keyword id="KW-0460">Magnesium</keyword>
<keyword id="KW-0464">Manganese</keyword>
<keyword id="KW-0479">Metal-binding</keyword>
<keyword id="KW-0547">Nucleotide-binding</keyword>
<keyword id="KW-0665">Pyrimidine biosynthesis</keyword>
<keyword id="KW-0677">Repeat</keyword>
<protein>
    <recommendedName>
        <fullName evidence="1">Carbamoyl phosphate synthase large chain</fullName>
        <ecNumber evidence="1">6.3.4.16</ecNumber>
        <ecNumber evidence="1">6.3.5.5</ecNumber>
    </recommendedName>
    <alternativeName>
        <fullName evidence="1">Carbamoyl phosphate synthetase ammonia chain</fullName>
    </alternativeName>
</protein>
<feature type="chain" id="PRO_0000145065" description="Carbamoyl phosphate synthase large chain">
    <location>
        <begin position="1"/>
        <end position="1080"/>
    </location>
</feature>
<feature type="domain" description="ATP-grasp 1" evidence="1">
    <location>
        <begin position="133"/>
        <end position="328"/>
    </location>
</feature>
<feature type="domain" description="ATP-grasp 2" evidence="1">
    <location>
        <begin position="679"/>
        <end position="876"/>
    </location>
</feature>
<feature type="domain" description="MGS-like" evidence="1">
    <location>
        <begin position="943"/>
        <end position="1080"/>
    </location>
</feature>
<feature type="region of interest" description="Carboxyphosphate synthetic domain" evidence="1">
    <location>
        <begin position="1"/>
        <end position="403"/>
    </location>
</feature>
<feature type="region of interest" description="Oligomerization domain" evidence="1">
    <location>
        <begin position="404"/>
        <end position="554"/>
    </location>
</feature>
<feature type="region of interest" description="Carbamoyl phosphate synthetic domain" evidence="1">
    <location>
        <begin position="555"/>
        <end position="942"/>
    </location>
</feature>
<feature type="region of interest" description="Allosteric domain" evidence="1">
    <location>
        <begin position="943"/>
        <end position="1080"/>
    </location>
</feature>
<feature type="binding site" evidence="1">
    <location>
        <position position="129"/>
    </location>
    <ligand>
        <name>ATP</name>
        <dbReference type="ChEBI" id="CHEBI:30616"/>
        <label>1</label>
    </ligand>
</feature>
<feature type="binding site" evidence="1">
    <location>
        <position position="169"/>
    </location>
    <ligand>
        <name>ATP</name>
        <dbReference type="ChEBI" id="CHEBI:30616"/>
        <label>1</label>
    </ligand>
</feature>
<feature type="binding site" evidence="1">
    <location>
        <position position="175"/>
    </location>
    <ligand>
        <name>ATP</name>
        <dbReference type="ChEBI" id="CHEBI:30616"/>
        <label>1</label>
    </ligand>
</feature>
<feature type="binding site" evidence="1">
    <location>
        <position position="176"/>
    </location>
    <ligand>
        <name>ATP</name>
        <dbReference type="ChEBI" id="CHEBI:30616"/>
        <label>1</label>
    </ligand>
</feature>
<feature type="binding site" evidence="1">
    <location>
        <position position="208"/>
    </location>
    <ligand>
        <name>ATP</name>
        <dbReference type="ChEBI" id="CHEBI:30616"/>
        <label>1</label>
    </ligand>
</feature>
<feature type="binding site" evidence="1">
    <location>
        <position position="210"/>
    </location>
    <ligand>
        <name>ATP</name>
        <dbReference type="ChEBI" id="CHEBI:30616"/>
        <label>1</label>
    </ligand>
</feature>
<feature type="binding site" evidence="1">
    <location>
        <position position="215"/>
    </location>
    <ligand>
        <name>ATP</name>
        <dbReference type="ChEBI" id="CHEBI:30616"/>
        <label>1</label>
    </ligand>
</feature>
<feature type="binding site" evidence="1">
    <location>
        <position position="241"/>
    </location>
    <ligand>
        <name>ATP</name>
        <dbReference type="ChEBI" id="CHEBI:30616"/>
        <label>1</label>
    </ligand>
</feature>
<feature type="binding site" evidence="1">
    <location>
        <position position="242"/>
    </location>
    <ligand>
        <name>ATP</name>
        <dbReference type="ChEBI" id="CHEBI:30616"/>
        <label>1</label>
    </ligand>
</feature>
<feature type="binding site" evidence="1">
    <location>
        <position position="243"/>
    </location>
    <ligand>
        <name>ATP</name>
        <dbReference type="ChEBI" id="CHEBI:30616"/>
        <label>1</label>
    </ligand>
</feature>
<feature type="binding site" evidence="1">
    <location>
        <position position="285"/>
    </location>
    <ligand>
        <name>ATP</name>
        <dbReference type="ChEBI" id="CHEBI:30616"/>
        <label>1</label>
    </ligand>
</feature>
<feature type="binding site" evidence="1">
    <location>
        <position position="285"/>
    </location>
    <ligand>
        <name>Mg(2+)</name>
        <dbReference type="ChEBI" id="CHEBI:18420"/>
        <label>1</label>
    </ligand>
</feature>
<feature type="binding site" evidence="1">
    <location>
        <position position="285"/>
    </location>
    <ligand>
        <name>Mn(2+)</name>
        <dbReference type="ChEBI" id="CHEBI:29035"/>
        <label>1</label>
    </ligand>
</feature>
<feature type="binding site" evidence="1">
    <location>
        <position position="299"/>
    </location>
    <ligand>
        <name>ATP</name>
        <dbReference type="ChEBI" id="CHEBI:30616"/>
        <label>1</label>
    </ligand>
</feature>
<feature type="binding site" evidence="1">
    <location>
        <position position="299"/>
    </location>
    <ligand>
        <name>Mg(2+)</name>
        <dbReference type="ChEBI" id="CHEBI:18420"/>
        <label>1</label>
    </ligand>
</feature>
<feature type="binding site" evidence="1">
    <location>
        <position position="299"/>
    </location>
    <ligand>
        <name>Mg(2+)</name>
        <dbReference type="ChEBI" id="CHEBI:18420"/>
        <label>2</label>
    </ligand>
</feature>
<feature type="binding site" evidence="1">
    <location>
        <position position="299"/>
    </location>
    <ligand>
        <name>Mn(2+)</name>
        <dbReference type="ChEBI" id="CHEBI:29035"/>
        <label>1</label>
    </ligand>
</feature>
<feature type="binding site" evidence="1">
    <location>
        <position position="299"/>
    </location>
    <ligand>
        <name>Mn(2+)</name>
        <dbReference type="ChEBI" id="CHEBI:29035"/>
        <label>2</label>
    </ligand>
</feature>
<feature type="binding site" evidence="1">
    <location>
        <position position="301"/>
    </location>
    <ligand>
        <name>Mg(2+)</name>
        <dbReference type="ChEBI" id="CHEBI:18420"/>
        <label>2</label>
    </ligand>
</feature>
<feature type="binding site" evidence="1">
    <location>
        <position position="301"/>
    </location>
    <ligand>
        <name>Mn(2+)</name>
        <dbReference type="ChEBI" id="CHEBI:29035"/>
        <label>2</label>
    </ligand>
</feature>
<feature type="binding site" evidence="1">
    <location>
        <position position="715"/>
    </location>
    <ligand>
        <name>ATP</name>
        <dbReference type="ChEBI" id="CHEBI:30616"/>
        <label>2</label>
    </ligand>
</feature>
<feature type="binding site" evidence="1">
    <location>
        <position position="754"/>
    </location>
    <ligand>
        <name>ATP</name>
        <dbReference type="ChEBI" id="CHEBI:30616"/>
        <label>2</label>
    </ligand>
</feature>
<feature type="binding site" evidence="1">
    <location>
        <position position="756"/>
    </location>
    <ligand>
        <name>ATP</name>
        <dbReference type="ChEBI" id="CHEBI:30616"/>
        <label>2</label>
    </ligand>
</feature>
<feature type="binding site" evidence="1">
    <location>
        <position position="761"/>
    </location>
    <ligand>
        <name>ATP</name>
        <dbReference type="ChEBI" id="CHEBI:30616"/>
        <label>2</label>
    </ligand>
</feature>
<feature type="binding site" evidence="1">
    <location>
        <position position="787"/>
    </location>
    <ligand>
        <name>ATP</name>
        <dbReference type="ChEBI" id="CHEBI:30616"/>
        <label>2</label>
    </ligand>
</feature>
<feature type="binding site" evidence="1">
    <location>
        <position position="788"/>
    </location>
    <ligand>
        <name>ATP</name>
        <dbReference type="ChEBI" id="CHEBI:30616"/>
        <label>2</label>
    </ligand>
</feature>
<feature type="binding site" evidence="1">
    <location>
        <position position="789"/>
    </location>
    <ligand>
        <name>ATP</name>
        <dbReference type="ChEBI" id="CHEBI:30616"/>
        <label>2</label>
    </ligand>
</feature>
<feature type="binding site" evidence="1">
    <location>
        <position position="790"/>
    </location>
    <ligand>
        <name>ATP</name>
        <dbReference type="ChEBI" id="CHEBI:30616"/>
        <label>2</label>
    </ligand>
</feature>
<feature type="binding site" evidence="1">
    <location>
        <position position="830"/>
    </location>
    <ligand>
        <name>ATP</name>
        <dbReference type="ChEBI" id="CHEBI:30616"/>
        <label>2</label>
    </ligand>
</feature>
<feature type="binding site" evidence="1">
    <location>
        <position position="830"/>
    </location>
    <ligand>
        <name>Mg(2+)</name>
        <dbReference type="ChEBI" id="CHEBI:18420"/>
        <label>3</label>
    </ligand>
</feature>
<feature type="binding site" evidence="1">
    <location>
        <position position="830"/>
    </location>
    <ligand>
        <name>Mn(2+)</name>
        <dbReference type="ChEBI" id="CHEBI:29035"/>
        <label>3</label>
    </ligand>
</feature>
<feature type="binding site" evidence="1">
    <location>
        <position position="847"/>
    </location>
    <ligand>
        <name>ATP</name>
        <dbReference type="ChEBI" id="CHEBI:30616"/>
        <label>2</label>
    </ligand>
</feature>
<feature type="binding site" evidence="1">
    <location>
        <position position="847"/>
    </location>
    <ligand>
        <name>Mg(2+)</name>
        <dbReference type="ChEBI" id="CHEBI:18420"/>
        <label>3</label>
    </ligand>
</feature>
<feature type="binding site" evidence="1">
    <location>
        <position position="847"/>
    </location>
    <ligand>
        <name>Mg(2+)</name>
        <dbReference type="ChEBI" id="CHEBI:18420"/>
        <label>4</label>
    </ligand>
</feature>
<feature type="binding site" evidence="1">
    <location>
        <position position="847"/>
    </location>
    <ligand>
        <name>Mn(2+)</name>
        <dbReference type="ChEBI" id="CHEBI:29035"/>
        <label>3</label>
    </ligand>
</feature>
<feature type="binding site" evidence="1">
    <location>
        <position position="847"/>
    </location>
    <ligand>
        <name>Mn(2+)</name>
        <dbReference type="ChEBI" id="CHEBI:29035"/>
        <label>4</label>
    </ligand>
</feature>
<feature type="binding site" evidence="1">
    <location>
        <position position="849"/>
    </location>
    <ligand>
        <name>Mg(2+)</name>
        <dbReference type="ChEBI" id="CHEBI:18420"/>
        <label>4</label>
    </ligand>
</feature>
<feature type="binding site" evidence="1">
    <location>
        <position position="849"/>
    </location>
    <ligand>
        <name>Mn(2+)</name>
        <dbReference type="ChEBI" id="CHEBI:29035"/>
        <label>4</label>
    </ligand>
</feature>
<evidence type="ECO:0000255" key="1">
    <source>
        <dbReference type="HAMAP-Rule" id="MF_01210"/>
    </source>
</evidence>
<evidence type="ECO:0000305" key="2"/>
<dbReference type="EC" id="6.3.4.16" evidence="1"/>
<dbReference type="EC" id="6.3.5.5" evidence="1"/>
<dbReference type="EMBL" id="AE008923">
    <property type="protein sequence ID" value="AAM36724.1"/>
    <property type="status" value="ALT_INIT"/>
    <property type="molecule type" value="Genomic_DNA"/>
</dbReference>
<dbReference type="RefSeq" id="WP_011051189.1">
    <property type="nucleotide sequence ID" value="NC_003919.1"/>
</dbReference>
<dbReference type="SMR" id="P58942"/>
<dbReference type="GeneID" id="66911009"/>
<dbReference type="KEGG" id="xac:XAC1862"/>
<dbReference type="eggNOG" id="COG0458">
    <property type="taxonomic scope" value="Bacteria"/>
</dbReference>
<dbReference type="HOGENOM" id="CLU_000513_1_0_6"/>
<dbReference type="UniPathway" id="UPA00068">
    <property type="reaction ID" value="UER00171"/>
</dbReference>
<dbReference type="UniPathway" id="UPA00070">
    <property type="reaction ID" value="UER00115"/>
</dbReference>
<dbReference type="Proteomes" id="UP000000576">
    <property type="component" value="Chromosome"/>
</dbReference>
<dbReference type="GO" id="GO:0005737">
    <property type="term" value="C:cytoplasm"/>
    <property type="evidence" value="ECO:0007669"/>
    <property type="project" value="TreeGrafter"/>
</dbReference>
<dbReference type="GO" id="GO:0005524">
    <property type="term" value="F:ATP binding"/>
    <property type="evidence" value="ECO:0007669"/>
    <property type="project" value="UniProtKB-UniRule"/>
</dbReference>
<dbReference type="GO" id="GO:0004087">
    <property type="term" value="F:carbamoyl-phosphate synthase (ammonia) activity"/>
    <property type="evidence" value="ECO:0007669"/>
    <property type="project" value="RHEA"/>
</dbReference>
<dbReference type="GO" id="GO:0004088">
    <property type="term" value="F:carbamoyl-phosphate synthase (glutamine-hydrolyzing) activity"/>
    <property type="evidence" value="ECO:0007669"/>
    <property type="project" value="UniProtKB-UniRule"/>
</dbReference>
<dbReference type="GO" id="GO:0046872">
    <property type="term" value="F:metal ion binding"/>
    <property type="evidence" value="ECO:0007669"/>
    <property type="project" value="UniProtKB-KW"/>
</dbReference>
<dbReference type="GO" id="GO:0044205">
    <property type="term" value="P:'de novo' UMP biosynthetic process"/>
    <property type="evidence" value="ECO:0007669"/>
    <property type="project" value="UniProtKB-UniRule"/>
</dbReference>
<dbReference type="GO" id="GO:0006541">
    <property type="term" value="P:glutamine metabolic process"/>
    <property type="evidence" value="ECO:0007669"/>
    <property type="project" value="TreeGrafter"/>
</dbReference>
<dbReference type="GO" id="GO:0006526">
    <property type="term" value="P:L-arginine biosynthetic process"/>
    <property type="evidence" value="ECO:0007669"/>
    <property type="project" value="UniProtKB-UniRule"/>
</dbReference>
<dbReference type="CDD" id="cd01424">
    <property type="entry name" value="MGS_CPS_II"/>
    <property type="match status" value="1"/>
</dbReference>
<dbReference type="FunFam" id="1.10.1030.10:FF:000002">
    <property type="entry name" value="Carbamoyl-phosphate synthase large chain"/>
    <property type="match status" value="1"/>
</dbReference>
<dbReference type="FunFam" id="3.30.1490.20:FF:000001">
    <property type="entry name" value="Carbamoyl-phosphate synthase large chain"/>
    <property type="match status" value="1"/>
</dbReference>
<dbReference type="FunFam" id="3.30.470.20:FF:000007">
    <property type="entry name" value="Carbamoyl-phosphate synthase large chain"/>
    <property type="match status" value="1"/>
</dbReference>
<dbReference type="FunFam" id="3.30.470.20:FF:000013">
    <property type="entry name" value="Carbamoyl-phosphate synthase large chain"/>
    <property type="match status" value="1"/>
</dbReference>
<dbReference type="FunFam" id="3.40.50.20:FF:000001">
    <property type="entry name" value="Carbamoyl-phosphate synthase large chain"/>
    <property type="match status" value="1"/>
</dbReference>
<dbReference type="FunFam" id="3.40.50.20:FF:000003">
    <property type="entry name" value="Carbamoyl-phosphate synthase large chain"/>
    <property type="match status" value="1"/>
</dbReference>
<dbReference type="Gene3D" id="3.40.50.20">
    <property type="match status" value="2"/>
</dbReference>
<dbReference type="Gene3D" id="3.30.470.20">
    <property type="entry name" value="ATP-grasp fold, B domain"/>
    <property type="match status" value="2"/>
</dbReference>
<dbReference type="Gene3D" id="1.10.1030.10">
    <property type="entry name" value="Carbamoyl-phosphate synthetase, large subunit oligomerisation domain"/>
    <property type="match status" value="1"/>
</dbReference>
<dbReference type="Gene3D" id="3.40.50.1380">
    <property type="entry name" value="Methylglyoxal synthase-like domain"/>
    <property type="match status" value="1"/>
</dbReference>
<dbReference type="HAMAP" id="MF_01210_A">
    <property type="entry name" value="CPSase_L_chain_A"/>
    <property type="match status" value="1"/>
</dbReference>
<dbReference type="HAMAP" id="MF_01210_B">
    <property type="entry name" value="CPSase_L_chain_B"/>
    <property type="match status" value="1"/>
</dbReference>
<dbReference type="InterPro" id="IPR011761">
    <property type="entry name" value="ATP-grasp"/>
</dbReference>
<dbReference type="InterPro" id="IPR006275">
    <property type="entry name" value="CarbamoylP_synth_lsu"/>
</dbReference>
<dbReference type="InterPro" id="IPR005480">
    <property type="entry name" value="CarbamoylP_synth_lsu_oligo"/>
</dbReference>
<dbReference type="InterPro" id="IPR036897">
    <property type="entry name" value="CarbamoylP_synth_lsu_oligo_sf"/>
</dbReference>
<dbReference type="InterPro" id="IPR005479">
    <property type="entry name" value="CbamoylP_synth_lsu-like_ATP-bd"/>
</dbReference>
<dbReference type="InterPro" id="IPR005483">
    <property type="entry name" value="CbamoylP_synth_lsu_CPSase_dom"/>
</dbReference>
<dbReference type="InterPro" id="IPR011607">
    <property type="entry name" value="MGS-like_dom"/>
</dbReference>
<dbReference type="InterPro" id="IPR036914">
    <property type="entry name" value="MGS-like_dom_sf"/>
</dbReference>
<dbReference type="InterPro" id="IPR033937">
    <property type="entry name" value="MGS_CPS_CarB"/>
</dbReference>
<dbReference type="InterPro" id="IPR016185">
    <property type="entry name" value="PreATP-grasp_dom_sf"/>
</dbReference>
<dbReference type="NCBIfam" id="TIGR01369">
    <property type="entry name" value="CPSaseII_lrg"/>
    <property type="match status" value="1"/>
</dbReference>
<dbReference type="NCBIfam" id="NF003671">
    <property type="entry name" value="PRK05294.1"/>
    <property type="match status" value="1"/>
</dbReference>
<dbReference type="NCBIfam" id="NF009455">
    <property type="entry name" value="PRK12815.1"/>
    <property type="match status" value="1"/>
</dbReference>
<dbReference type="PANTHER" id="PTHR11405:SF53">
    <property type="entry name" value="CARBAMOYL-PHOSPHATE SYNTHASE [AMMONIA], MITOCHONDRIAL"/>
    <property type="match status" value="1"/>
</dbReference>
<dbReference type="PANTHER" id="PTHR11405">
    <property type="entry name" value="CARBAMOYLTRANSFERASE FAMILY MEMBER"/>
    <property type="match status" value="1"/>
</dbReference>
<dbReference type="Pfam" id="PF02786">
    <property type="entry name" value="CPSase_L_D2"/>
    <property type="match status" value="2"/>
</dbReference>
<dbReference type="Pfam" id="PF02787">
    <property type="entry name" value="CPSase_L_D3"/>
    <property type="match status" value="1"/>
</dbReference>
<dbReference type="Pfam" id="PF02142">
    <property type="entry name" value="MGS"/>
    <property type="match status" value="1"/>
</dbReference>
<dbReference type="PRINTS" id="PR00098">
    <property type="entry name" value="CPSASE"/>
</dbReference>
<dbReference type="SMART" id="SM01096">
    <property type="entry name" value="CPSase_L_D3"/>
    <property type="match status" value="1"/>
</dbReference>
<dbReference type="SMART" id="SM00851">
    <property type="entry name" value="MGS"/>
    <property type="match status" value="1"/>
</dbReference>
<dbReference type="SUPFAM" id="SSF48108">
    <property type="entry name" value="Carbamoyl phosphate synthetase, large subunit connection domain"/>
    <property type="match status" value="1"/>
</dbReference>
<dbReference type="SUPFAM" id="SSF56059">
    <property type="entry name" value="Glutathione synthetase ATP-binding domain-like"/>
    <property type="match status" value="2"/>
</dbReference>
<dbReference type="SUPFAM" id="SSF52335">
    <property type="entry name" value="Methylglyoxal synthase-like"/>
    <property type="match status" value="1"/>
</dbReference>
<dbReference type="SUPFAM" id="SSF52440">
    <property type="entry name" value="PreATP-grasp domain"/>
    <property type="match status" value="2"/>
</dbReference>
<dbReference type="PROSITE" id="PS50975">
    <property type="entry name" value="ATP_GRASP"/>
    <property type="match status" value="2"/>
</dbReference>
<dbReference type="PROSITE" id="PS00866">
    <property type="entry name" value="CPSASE_1"/>
    <property type="match status" value="1"/>
</dbReference>
<dbReference type="PROSITE" id="PS00867">
    <property type="entry name" value="CPSASE_2"/>
    <property type="match status" value="2"/>
</dbReference>
<dbReference type="PROSITE" id="PS51855">
    <property type="entry name" value="MGS"/>
    <property type="match status" value="1"/>
</dbReference>
<name>CARB_XANAC</name>
<gene>
    <name evidence="1" type="primary">carB</name>
    <name type="ordered locus">XAC1862</name>
</gene>
<comment type="function">
    <text evidence="1">Large subunit of the glutamine-dependent carbamoyl phosphate synthetase (CPSase). CPSase catalyzes the formation of carbamoyl phosphate from the ammonia moiety of glutamine, carbonate, and phosphate donated by ATP, constituting the first step of 2 biosynthetic pathways, one leading to arginine and/or urea and the other to pyrimidine nucleotides. The large subunit (synthetase) binds the substrates ammonia (free or transferred from glutamine from the small subunit), hydrogencarbonate and ATP and carries out an ATP-coupled ligase reaction, activating hydrogencarbonate by forming carboxy phosphate which reacts with ammonia to form carbamoyl phosphate.</text>
</comment>
<comment type="catalytic activity">
    <reaction evidence="1">
        <text>hydrogencarbonate + L-glutamine + 2 ATP + H2O = carbamoyl phosphate + L-glutamate + 2 ADP + phosphate + 2 H(+)</text>
        <dbReference type="Rhea" id="RHEA:18633"/>
        <dbReference type="ChEBI" id="CHEBI:15377"/>
        <dbReference type="ChEBI" id="CHEBI:15378"/>
        <dbReference type="ChEBI" id="CHEBI:17544"/>
        <dbReference type="ChEBI" id="CHEBI:29985"/>
        <dbReference type="ChEBI" id="CHEBI:30616"/>
        <dbReference type="ChEBI" id="CHEBI:43474"/>
        <dbReference type="ChEBI" id="CHEBI:58228"/>
        <dbReference type="ChEBI" id="CHEBI:58359"/>
        <dbReference type="ChEBI" id="CHEBI:456216"/>
        <dbReference type="EC" id="6.3.5.5"/>
    </reaction>
</comment>
<comment type="catalytic activity">
    <molecule>Carbamoyl phosphate synthase large chain</molecule>
    <reaction evidence="1">
        <text>hydrogencarbonate + NH4(+) + 2 ATP = carbamoyl phosphate + 2 ADP + phosphate + 2 H(+)</text>
        <dbReference type="Rhea" id="RHEA:18029"/>
        <dbReference type="ChEBI" id="CHEBI:15378"/>
        <dbReference type="ChEBI" id="CHEBI:17544"/>
        <dbReference type="ChEBI" id="CHEBI:28938"/>
        <dbReference type="ChEBI" id="CHEBI:30616"/>
        <dbReference type="ChEBI" id="CHEBI:43474"/>
        <dbReference type="ChEBI" id="CHEBI:58228"/>
        <dbReference type="ChEBI" id="CHEBI:456216"/>
        <dbReference type="EC" id="6.3.4.16"/>
    </reaction>
</comment>
<comment type="cofactor">
    <cofactor evidence="1">
        <name>Mg(2+)</name>
        <dbReference type="ChEBI" id="CHEBI:18420"/>
    </cofactor>
    <cofactor evidence="1">
        <name>Mn(2+)</name>
        <dbReference type="ChEBI" id="CHEBI:29035"/>
    </cofactor>
    <text evidence="1">Binds 4 Mg(2+) or Mn(2+) ions per subunit.</text>
</comment>
<comment type="pathway">
    <text evidence="1">Amino-acid biosynthesis; L-arginine biosynthesis; carbamoyl phosphate from bicarbonate: step 1/1.</text>
</comment>
<comment type="pathway">
    <text evidence="1">Pyrimidine metabolism; UMP biosynthesis via de novo pathway; (S)-dihydroorotate from bicarbonate: step 1/3.</text>
</comment>
<comment type="subunit">
    <text evidence="1">Composed of two chains; the small (or glutamine) chain promotes the hydrolysis of glutamine to ammonia, which is used by the large (or ammonia) chain to synthesize carbamoyl phosphate. Tetramer of heterodimers (alpha,beta)4.</text>
</comment>
<comment type="domain">
    <text evidence="1">The large subunit is composed of 2 ATP-grasp domains that are involved in binding the 2 ATP molecules needed for carbamoyl phosphate synthesis. The N-terminal ATP-grasp domain (referred to as the carboxyphosphate synthetic component) catalyzes the ATP-dependent phosphorylation of hydrogencarbonate to carboxyphosphate and the subsequent nucleophilic attack by ammonia to form a carbamate intermediate. The C-terminal ATP-grasp domain (referred to as the carbamoyl phosphate synthetic component) then catalyzes the phosphorylation of carbamate with the second ATP to form the end product carbamoyl phosphate. The reactive and unstable enzyme intermediates are sequentially channeled from one active site to the next through the interior of the protein over a distance of at least 96 A.</text>
</comment>
<comment type="similarity">
    <text evidence="1">Belongs to the CarB family.</text>
</comment>
<comment type="sequence caution" evidence="2">
    <conflict type="erroneous initiation">
        <sequence resource="EMBL-CDS" id="AAM36724"/>
    </conflict>
</comment>
<proteinExistence type="inferred from homology"/>
<sequence>MPKRTDLETILIIGAGPIVIGQACEFDYSGAQACKALRDEGYRVVLVNSNPATIMTDPNMADAVYIEPINWQTVEKIIAKEKPDALLPTMGGQTALNCALDLADHGVLEKYNVELIGAKREAIRMAEDRELFRVAMGEIGLDCPTAAVAHTLEEALEIQTRVGYPTIIRPSFTLGGSGGGIAYNREELIEIVGRGLELSPTTEVLVEESVLGWKEFEMEVVRDTADNCIIVCAIENLDPMGVHTGDSITVAPAQTLTDKEYQRLRDASIAVLRKIGVDTGGSNVQFGISPTTGRVVVIEMNPRVSRSSALASKATGFPIAKVAAKLAVGYTLDELKNEITGGLTPASFEPSIDYVVTKIPRFAFEKFPQADARLTTQMKSVGEVMAMGRTFSESLQKALRGLETGKIGLDPTGLDLSSEDDIATLKRELKAPGPERLFYVADAFRAGMTVADVYALSFIDPWFLDQIEEIVSHEQQLADDGMAALDAPRLRMLKRAGFSDARMAQLIGSNEESVRTLRRALKVRPVYKRVDSCAAEFATSTAYLYSTYEDECEALPTDRDKIMILGGGPNRIGQGIEFDYCCVHAALALRDDGFETIMVNCNPETVSTDYDTSDRLYFEPLTLEDVLEIVELEKPKGVIVQYGGQTPLKLARALEANGVPVIGTSPDSIDLAEDRERFQQLVDKLGLKQPPNRIARNAEEALVLAREIGYPLVVRPSYVLGGRAMEIVYGESDLARYVRDAVKVSNDSPVLLDRFLDNAVEVDVDIIADKDGNVLIGGVMEHIEEAGVHSGDSSCSLPPYSLSPQTQAELRRQVVMLAEGLNVVGLMNTQFAVQVNEAGDDIVYLLEVNPRASRTVPFVSKAIGMPLAKIAARCMAGKTLAEQGATKEIVPDYYSVKEAIFPFAKFQGVDPILGPEMRSTGEVMGVGRSFSAAFARAQEAGGIKAPPLGKAFVSVRDPDKQRVLPVAQALVERGFTLVATRGTGAWLQQNGLSCEIVNKVAEGRPHIVDSIKNGEIVYIVNTTEGRAAISDSFSIRREALQHRVTYSTTVAGAKALVQSLEFRGTGPVWSLQELHKELEA</sequence>
<accession>P58942</accession>
<reference key="1">
    <citation type="journal article" date="2002" name="Nature">
        <title>Comparison of the genomes of two Xanthomonas pathogens with differing host specificities.</title>
        <authorList>
            <person name="da Silva A.C.R."/>
            <person name="Ferro J.A."/>
            <person name="Reinach F.C."/>
            <person name="Farah C.S."/>
            <person name="Furlan L.R."/>
            <person name="Quaggio R.B."/>
            <person name="Monteiro-Vitorello C.B."/>
            <person name="Van Sluys M.A."/>
            <person name="Almeida N.F. Jr."/>
            <person name="Alves L.M.C."/>
            <person name="do Amaral A.M."/>
            <person name="Bertolini M.C."/>
            <person name="Camargo L.E.A."/>
            <person name="Camarotte G."/>
            <person name="Cannavan F."/>
            <person name="Cardozo J."/>
            <person name="Chambergo F."/>
            <person name="Ciapina L.P."/>
            <person name="Cicarelli R.M.B."/>
            <person name="Coutinho L.L."/>
            <person name="Cursino-Santos J.R."/>
            <person name="El-Dorry H."/>
            <person name="Faria J.B."/>
            <person name="Ferreira A.J.S."/>
            <person name="Ferreira R.C.C."/>
            <person name="Ferro M.I.T."/>
            <person name="Formighieri E.F."/>
            <person name="Franco M.C."/>
            <person name="Greggio C.C."/>
            <person name="Gruber A."/>
            <person name="Katsuyama A.M."/>
            <person name="Kishi L.T."/>
            <person name="Leite R.P."/>
            <person name="Lemos E.G.M."/>
            <person name="Lemos M.V.F."/>
            <person name="Locali E.C."/>
            <person name="Machado M.A."/>
            <person name="Madeira A.M.B.N."/>
            <person name="Martinez-Rossi N.M."/>
            <person name="Martins E.C."/>
            <person name="Meidanis J."/>
            <person name="Menck C.F.M."/>
            <person name="Miyaki C.Y."/>
            <person name="Moon D.H."/>
            <person name="Moreira L.M."/>
            <person name="Novo M.T.M."/>
            <person name="Okura V.K."/>
            <person name="Oliveira M.C."/>
            <person name="Oliveira V.R."/>
            <person name="Pereira H.A."/>
            <person name="Rossi A."/>
            <person name="Sena J.A.D."/>
            <person name="Silva C."/>
            <person name="de Souza R.F."/>
            <person name="Spinola L.A.F."/>
            <person name="Takita M.A."/>
            <person name="Tamura R.E."/>
            <person name="Teixeira E.C."/>
            <person name="Tezza R.I.D."/>
            <person name="Trindade dos Santos M."/>
            <person name="Truffi D."/>
            <person name="Tsai S.M."/>
            <person name="White F.F."/>
            <person name="Setubal J.C."/>
            <person name="Kitajima J.P."/>
        </authorList>
    </citation>
    <scope>NUCLEOTIDE SEQUENCE [LARGE SCALE GENOMIC DNA]</scope>
    <source>
        <strain>306</strain>
    </source>
</reference>
<organism>
    <name type="scientific">Xanthomonas axonopodis pv. citri (strain 306)</name>
    <dbReference type="NCBI Taxonomy" id="190486"/>
    <lineage>
        <taxon>Bacteria</taxon>
        <taxon>Pseudomonadati</taxon>
        <taxon>Pseudomonadota</taxon>
        <taxon>Gammaproteobacteria</taxon>
        <taxon>Lysobacterales</taxon>
        <taxon>Lysobacteraceae</taxon>
        <taxon>Xanthomonas</taxon>
    </lineage>
</organism>